<feature type="chain" id="PRO_1000053186" description="ATP synthase gamma chain">
    <location>
        <begin position="1"/>
        <end position="293"/>
    </location>
</feature>
<keyword id="KW-0066">ATP synthesis</keyword>
<keyword id="KW-0997">Cell inner membrane</keyword>
<keyword id="KW-1003">Cell membrane</keyword>
<keyword id="KW-0139">CF(1)</keyword>
<keyword id="KW-0375">Hydrogen ion transport</keyword>
<keyword id="KW-0406">Ion transport</keyword>
<keyword id="KW-0472">Membrane</keyword>
<keyword id="KW-0813">Transport</keyword>
<comment type="function">
    <text evidence="1">Produces ATP from ADP in the presence of a proton gradient across the membrane. The gamma chain is believed to be important in regulating ATPase activity and the flow of protons through the CF(0) complex.</text>
</comment>
<comment type="subunit">
    <text evidence="1">F-type ATPases have 2 components, CF(1) - the catalytic core - and CF(0) - the membrane proton channel. CF(1) has five subunits: alpha(3), beta(3), gamma(1), delta(1), epsilon(1). CF(0) has three main subunits: a, b and c.</text>
</comment>
<comment type="subcellular location">
    <subcellularLocation>
        <location evidence="1">Cell inner membrane</location>
        <topology evidence="1">Peripheral membrane protein</topology>
    </subcellularLocation>
</comment>
<comment type="similarity">
    <text evidence="1">Belongs to the ATPase gamma chain family.</text>
</comment>
<gene>
    <name evidence="1" type="primary">atpG</name>
    <name type="ordered locus">Cag_0141</name>
</gene>
<accession>Q3AUA6</accession>
<evidence type="ECO:0000255" key="1">
    <source>
        <dbReference type="HAMAP-Rule" id="MF_00815"/>
    </source>
</evidence>
<organism>
    <name type="scientific">Chlorobium chlorochromatii (strain CaD3)</name>
    <dbReference type="NCBI Taxonomy" id="340177"/>
    <lineage>
        <taxon>Bacteria</taxon>
        <taxon>Pseudomonadati</taxon>
        <taxon>Chlorobiota</taxon>
        <taxon>Chlorobiia</taxon>
        <taxon>Chlorobiales</taxon>
        <taxon>Chlorobiaceae</taxon>
        <taxon>Chlorobium/Pelodictyon group</taxon>
        <taxon>Chlorobium</taxon>
    </lineage>
</organism>
<name>ATPG_CHLCH</name>
<dbReference type="EMBL" id="CP000108">
    <property type="protein sequence ID" value="ABB27419.1"/>
    <property type="molecule type" value="Genomic_DNA"/>
</dbReference>
<dbReference type="SMR" id="Q3AUA6"/>
<dbReference type="STRING" id="340177.Cag_0141"/>
<dbReference type="KEGG" id="cch:Cag_0141"/>
<dbReference type="eggNOG" id="COG0224">
    <property type="taxonomic scope" value="Bacteria"/>
</dbReference>
<dbReference type="HOGENOM" id="CLU_050669_0_1_10"/>
<dbReference type="OrthoDB" id="9812769at2"/>
<dbReference type="GO" id="GO:0005886">
    <property type="term" value="C:plasma membrane"/>
    <property type="evidence" value="ECO:0007669"/>
    <property type="project" value="UniProtKB-SubCell"/>
</dbReference>
<dbReference type="GO" id="GO:0045259">
    <property type="term" value="C:proton-transporting ATP synthase complex"/>
    <property type="evidence" value="ECO:0007669"/>
    <property type="project" value="UniProtKB-KW"/>
</dbReference>
<dbReference type="GO" id="GO:0005524">
    <property type="term" value="F:ATP binding"/>
    <property type="evidence" value="ECO:0007669"/>
    <property type="project" value="UniProtKB-UniRule"/>
</dbReference>
<dbReference type="GO" id="GO:0046933">
    <property type="term" value="F:proton-transporting ATP synthase activity, rotational mechanism"/>
    <property type="evidence" value="ECO:0007669"/>
    <property type="project" value="UniProtKB-UniRule"/>
</dbReference>
<dbReference type="GO" id="GO:0042777">
    <property type="term" value="P:proton motive force-driven plasma membrane ATP synthesis"/>
    <property type="evidence" value="ECO:0007669"/>
    <property type="project" value="UniProtKB-UniRule"/>
</dbReference>
<dbReference type="CDD" id="cd12151">
    <property type="entry name" value="F1-ATPase_gamma"/>
    <property type="match status" value="1"/>
</dbReference>
<dbReference type="Gene3D" id="3.40.1380.10">
    <property type="match status" value="1"/>
</dbReference>
<dbReference type="Gene3D" id="1.10.287.80">
    <property type="entry name" value="ATP synthase, gamma subunit, helix hairpin domain"/>
    <property type="match status" value="1"/>
</dbReference>
<dbReference type="HAMAP" id="MF_00815">
    <property type="entry name" value="ATP_synth_gamma_bact"/>
    <property type="match status" value="1"/>
</dbReference>
<dbReference type="InterPro" id="IPR035968">
    <property type="entry name" value="ATP_synth_F1_ATPase_gsu"/>
</dbReference>
<dbReference type="InterPro" id="IPR000131">
    <property type="entry name" value="ATP_synth_F1_gsu"/>
</dbReference>
<dbReference type="InterPro" id="IPR023632">
    <property type="entry name" value="ATP_synth_F1_gsu_CS"/>
</dbReference>
<dbReference type="NCBIfam" id="TIGR01146">
    <property type="entry name" value="ATPsyn_F1gamma"/>
    <property type="match status" value="1"/>
</dbReference>
<dbReference type="NCBIfam" id="NF009958">
    <property type="entry name" value="PRK13425.1"/>
    <property type="match status" value="1"/>
</dbReference>
<dbReference type="PANTHER" id="PTHR11693">
    <property type="entry name" value="ATP SYNTHASE GAMMA CHAIN"/>
    <property type="match status" value="1"/>
</dbReference>
<dbReference type="PANTHER" id="PTHR11693:SF22">
    <property type="entry name" value="ATP SYNTHASE SUBUNIT GAMMA, MITOCHONDRIAL"/>
    <property type="match status" value="1"/>
</dbReference>
<dbReference type="Pfam" id="PF00231">
    <property type="entry name" value="ATP-synt"/>
    <property type="match status" value="1"/>
</dbReference>
<dbReference type="PRINTS" id="PR00126">
    <property type="entry name" value="ATPASEGAMMA"/>
</dbReference>
<dbReference type="SUPFAM" id="SSF52943">
    <property type="entry name" value="ATP synthase (F1-ATPase), gamma subunit"/>
    <property type="match status" value="1"/>
</dbReference>
<dbReference type="PROSITE" id="PS00153">
    <property type="entry name" value="ATPASE_GAMMA"/>
    <property type="match status" value="1"/>
</dbReference>
<sequence>MATLKDIRVRIKGVKSTQQVTKAMKMVAAAKLRRAQDRAIMARPYASKLKEMLASLSAKVDTSVNPLFAVRSEVNKVLVILVTSDRGLCGAFNGNIIKLAYKTIHEDYAAQYGKGGVSMICAGTRGYEFFKKRHYTLTKGYPAVFQNLDFAVAKEIADMASNMYLRGEVDRVVVVYNEFKSVLAPQLKSEVLLPITSGDASAKENSGGEYMYEPNPAAIIDVLLPKHLRTQVWRIMLESNAAEQAARMAAMDSATENAKELLRTLNISYNRARQAAITTELSEIVAGAEALNG</sequence>
<protein>
    <recommendedName>
        <fullName evidence="1">ATP synthase gamma chain</fullName>
    </recommendedName>
    <alternativeName>
        <fullName evidence="1">ATP synthase F1 sector gamma subunit</fullName>
    </alternativeName>
    <alternativeName>
        <fullName evidence="1">F-ATPase gamma subunit</fullName>
    </alternativeName>
</protein>
<proteinExistence type="inferred from homology"/>
<reference key="1">
    <citation type="submission" date="2005-08" db="EMBL/GenBank/DDBJ databases">
        <title>Complete sequence of Chlorobium chlorochromatii CaD3.</title>
        <authorList>
            <consortium name="US DOE Joint Genome Institute"/>
            <person name="Copeland A."/>
            <person name="Lucas S."/>
            <person name="Lapidus A."/>
            <person name="Barry K."/>
            <person name="Detter J.C."/>
            <person name="Glavina T."/>
            <person name="Hammon N."/>
            <person name="Israni S."/>
            <person name="Pitluck S."/>
            <person name="Bryant D."/>
            <person name="Schmutz J."/>
            <person name="Larimer F."/>
            <person name="Land M."/>
            <person name="Kyrpides N."/>
            <person name="Ivanova N."/>
            <person name="Richardson P."/>
        </authorList>
    </citation>
    <scope>NUCLEOTIDE SEQUENCE [LARGE SCALE GENOMIC DNA]</scope>
    <source>
        <strain>CaD3</strain>
    </source>
</reference>